<dbReference type="EMBL" id="CP000253">
    <property type="protein sequence ID" value="ABD32006.1"/>
    <property type="molecule type" value="Genomic_DNA"/>
</dbReference>
<dbReference type="RefSeq" id="WP_000743717.1">
    <property type="nucleotide sequence ID" value="NZ_LS483365.1"/>
</dbReference>
<dbReference type="RefSeq" id="YP_501469.1">
    <property type="nucleotide sequence ID" value="NC_007795.1"/>
</dbReference>
<dbReference type="STRING" id="93061.SAOUHSC_03020"/>
<dbReference type="PaxDb" id="1280-SAXN108_2959"/>
<dbReference type="GeneID" id="3921287"/>
<dbReference type="KEGG" id="sao:SAOUHSC_03020"/>
<dbReference type="PATRIC" id="fig|93061.5.peg.2728"/>
<dbReference type="eggNOG" id="COG4720">
    <property type="taxonomic scope" value="Bacteria"/>
</dbReference>
<dbReference type="HOGENOM" id="CLU_120023_0_0_9"/>
<dbReference type="OrthoDB" id="4550662at2"/>
<dbReference type="PRO" id="PR:Q2FUT1"/>
<dbReference type="Proteomes" id="UP000008816">
    <property type="component" value="Chromosome"/>
</dbReference>
<dbReference type="GO" id="GO:0005886">
    <property type="term" value="C:plasma membrane"/>
    <property type="evidence" value="ECO:0007669"/>
    <property type="project" value="UniProtKB-SubCell"/>
</dbReference>
<dbReference type="Gene3D" id="1.10.1760.20">
    <property type="match status" value="1"/>
</dbReference>
<dbReference type="HAMAP" id="MF_01572">
    <property type="entry name" value="UPF0397"/>
    <property type="match status" value="1"/>
</dbReference>
<dbReference type="InterPro" id="IPR009825">
    <property type="entry name" value="ECF_substrate-spec-like"/>
</dbReference>
<dbReference type="InterPro" id="IPR022914">
    <property type="entry name" value="UPF0397"/>
</dbReference>
<dbReference type="NCBIfam" id="NF010182">
    <property type="entry name" value="PRK13661.1"/>
    <property type="match status" value="1"/>
</dbReference>
<dbReference type="PANTHER" id="PTHR37815">
    <property type="entry name" value="UPF0397 PROTEIN BC_2624-RELATED"/>
    <property type="match status" value="1"/>
</dbReference>
<dbReference type="PANTHER" id="PTHR37815:SF3">
    <property type="entry name" value="UPF0397 PROTEIN SPR0429"/>
    <property type="match status" value="1"/>
</dbReference>
<dbReference type="Pfam" id="PF07155">
    <property type="entry name" value="ECF-ribofla_trS"/>
    <property type="match status" value="1"/>
</dbReference>
<accession>Q2FUT1</accession>
<organism>
    <name type="scientific">Staphylococcus aureus (strain NCTC 8325 / PS 47)</name>
    <dbReference type="NCBI Taxonomy" id="93061"/>
    <lineage>
        <taxon>Bacteria</taxon>
        <taxon>Bacillati</taxon>
        <taxon>Bacillota</taxon>
        <taxon>Bacilli</taxon>
        <taxon>Bacillales</taxon>
        <taxon>Staphylococcaceae</taxon>
        <taxon>Staphylococcus</taxon>
    </lineage>
</organism>
<proteinExistence type="inferred from homology"/>
<comment type="subcellular location">
    <subcellularLocation>
        <location evidence="1">Cell membrane</location>
        <topology evidence="1">Multi-pass membrane protein</topology>
    </subcellularLocation>
</comment>
<comment type="similarity">
    <text evidence="1">Belongs to the UPF0397 family.</text>
</comment>
<sequence length="184" mass="19840">MKKQDISVKTVVAIGIGAAVFVILGRFVVIPTGFPNTNIETSYAFLALISAIFGPFAGLMTGLVGHAIKDFTTYGSAWWSWVICSGIIGCLYGWIGLKLNLSSGRFSRKSMVYFNIGQIIANIICWALIAPTLDILIYNEPANKVYTQGVISAVLNIISVGIIGTILLKAYASSQIKKGSLRKE</sequence>
<reference key="1">
    <citation type="book" date="2006" name="Gram positive pathogens, 2nd edition">
        <title>The Staphylococcus aureus NCTC 8325 genome.</title>
        <editorList>
            <person name="Fischetti V."/>
            <person name="Novick R."/>
            <person name="Ferretti J."/>
            <person name="Portnoy D."/>
            <person name="Rood J."/>
        </editorList>
        <authorList>
            <person name="Gillaspy A.F."/>
            <person name="Worrell V."/>
            <person name="Orvis J."/>
            <person name="Roe B.A."/>
            <person name="Dyer D.W."/>
            <person name="Iandolo J.J."/>
        </authorList>
    </citation>
    <scope>NUCLEOTIDE SEQUENCE [LARGE SCALE GENOMIC DNA]</scope>
    <source>
        <strain>NCTC 8325 / PS 47</strain>
    </source>
</reference>
<keyword id="KW-1003">Cell membrane</keyword>
<keyword id="KW-0472">Membrane</keyword>
<keyword id="KW-1185">Reference proteome</keyword>
<keyword id="KW-0812">Transmembrane</keyword>
<keyword id="KW-1133">Transmembrane helix</keyword>
<feature type="chain" id="PRO_0000260802" description="UPF0397 protein SAOUHSC_03020">
    <location>
        <begin position="1"/>
        <end position="184"/>
    </location>
</feature>
<feature type="transmembrane region" description="Helical" evidence="1">
    <location>
        <begin position="11"/>
        <end position="31"/>
    </location>
</feature>
<feature type="transmembrane region" description="Helical" evidence="1">
    <location>
        <begin position="44"/>
        <end position="64"/>
    </location>
</feature>
<feature type="transmembrane region" description="Helical" evidence="1">
    <location>
        <begin position="77"/>
        <end position="97"/>
    </location>
</feature>
<feature type="transmembrane region" description="Helical" evidence="1">
    <location>
        <begin position="116"/>
        <end position="136"/>
    </location>
</feature>
<feature type="transmembrane region" description="Helical" evidence="1">
    <location>
        <begin position="148"/>
        <end position="168"/>
    </location>
</feature>
<protein>
    <recommendedName>
        <fullName evidence="1">UPF0397 protein SAOUHSC_03020</fullName>
    </recommendedName>
</protein>
<name>Y3020_STAA8</name>
<evidence type="ECO:0000255" key="1">
    <source>
        <dbReference type="HAMAP-Rule" id="MF_01572"/>
    </source>
</evidence>
<gene>
    <name type="ordered locus">SAOUHSC_03020</name>
</gene>